<reference key="1">
    <citation type="journal article" date="2015" name="BMC Genomics">
        <title>Genome analyses of the sunflower pathogen Plasmopara halstedii provide insights into effector evolution in downy mildews and Phytophthora.</title>
        <authorList>
            <person name="Sharma R."/>
            <person name="Xia X."/>
            <person name="Cano L.M."/>
            <person name="Evangelisti E."/>
            <person name="Kemen E."/>
            <person name="Judelson H."/>
            <person name="Oome S."/>
            <person name="Sambles C."/>
            <person name="van den Hoogen D.J."/>
            <person name="Kitner M."/>
            <person name="Klein J."/>
            <person name="Meijer H.J."/>
            <person name="Spring O."/>
            <person name="Win J."/>
            <person name="Zipper R."/>
            <person name="Bode H.B."/>
            <person name="Govers F."/>
            <person name="Kamoun S."/>
            <person name="Schornack S."/>
            <person name="Studholme D.J."/>
            <person name="Van den Ackerveken G."/>
            <person name="Thines M."/>
        </authorList>
    </citation>
    <scope>NUCLEOTIDE SEQUENCE [LARGE SCALE GENOMIC DNA]</scope>
</reference>
<reference key="2">
    <citation type="journal article" date="2019" name="Plant J.">
        <title>Sunflower resistance to multiple downy mildew pathotypes revealed by recognition of conserved effectors of the oomycete Plasmopara halstedii.</title>
        <authorList>
            <person name="Pecrix Y."/>
            <person name="Buendia L."/>
            <person name="Penouilh-Suzette C."/>
            <person name="Marechaux M."/>
            <person name="Legrand L."/>
            <person name="Bouchez O."/>
            <person name="Rengel D."/>
            <person name="Gouzy J."/>
            <person name="Cottret L."/>
            <person name="Vear F."/>
            <person name="Godiard L."/>
        </authorList>
    </citation>
    <scope>DOMAIN</scope>
    <scope>INDUCTION</scope>
    <scope>FUNCTION</scope>
    <scope>SUBCELLULAR LOCATION</scope>
</reference>
<protein>
    <recommendedName>
        <fullName evidence="3">Secreted RxLR effector protein RXLR-C301</fullName>
    </recommendedName>
</protein>
<feature type="signal peptide" evidence="1">
    <location>
        <begin position="1"/>
        <end position="24"/>
    </location>
</feature>
<feature type="chain" id="PRO_5006058451" description="Secreted RxLR effector protein RXLR-C301">
    <location>
        <begin position="25"/>
        <end position="155"/>
    </location>
</feature>
<feature type="short sequence motif" description="RxLR-dEER" evidence="5">
    <location>
        <begin position="34"/>
        <end position="64"/>
    </location>
</feature>
<keyword id="KW-1032">Host cell membrane</keyword>
<keyword id="KW-1043">Host membrane</keyword>
<keyword id="KW-0472">Membrane</keyword>
<keyword id="KW-1185">Reference proteome</keyword>
<keyword id="KW-0964">Secreted</keyword>
<keyword id="KW-0732">Signal</keyword>
<keyword id="KW-0843">Virulence</keyword>
<gene>
    <name evidence="3" type="primary">RXLR-C30</name>
</gene>
<proteinExistence type="evidence at transcript level"/>
<name>RLR30_PLAHL</name>
<evidence type="ECO:0000255" key="1"/>
<evidence type="ECO:0000269" key="2">
    <source>
    </source>
</evidence>
<evidence type="ECO:0000303" key="3">
    <source>
    </source>
</evidence>
<evidence type="ECO:0000305" key="4"/>
<evidence type="ECO:0000305" key="5">
    <source>
    </source>
</evidence>
<accession>A0A0P1A8A0</accession>
<sequence>MRLYALSVSLLAAITLLACVIASADSNMVSQMKRRLSQDVSETEITELSESKKPTAQDIDNEERAQLTLLSDSQAIVAVAEKAAHSSPKVLGGTSALATTKFALQSQKTSRLRQLLDKVMKISGLLKKFLNFFKNKKTNTVPKLENKPHNAFDTV</sequence>
<comment type="function">
    <text evidence="2">Secreted effector that does not suppress pattern-triggered immunity (PTI) in plant host.</text>
</comment>
<comment type="subcellular location">
    <subcellularLocation>
        <location evidence="2">Secreted</location>
    </subcellularLocation>
    <subcellularLocation>
        <location evidence="2">Host cell membrane</location>
    </subcellularLocation>
    <text evidence="2">Also localizes to the host tonoplast.</text>
</comment>
<comment type="induction">
    <text evidence="2">Expression is up-regulated during the early plant infection stages.</text>
</comment>
<comment type="domain">
    <text evidence="5">Has the canonical translocation RxLR motif, but lacks the canonical EER motif, which characterizes most oomycete effectors identified so far.</text>
</comment>
<comment type="similarity">
    <text evidence="4">Belongs to the RxLR effector family.</text>
</comment>
<organism>
    <name type="scientific">Plasmopara halstedii</name>
    <name type="common">Downy mildew of sunflower</name>
    <dbReference type="NCBI Taxonomy" id="4781"/>
    <lineage>
        <taxon>Eukaryota</taxon>
        <taxon>Sar</taxon>
        <taxon>Stramenopiles</taxon>
        <taxon>Oomycota</taxon>
        <taxon>Peronosporales</taxon>
        <taxon>Peronosporaceae</taxon>
        <taxon>Plasmopara</taxon>
    </lineage>
</organism>
<dbReference type="EMBL" id="CCYD01000201">
    <property type="protein sequence ID" value="CEG36406.1"/>
    <property type="molecule type" value="Genomic_DNA"/>
</dbReference>
<dbReference type="SMR" id="A0A0P1A8A0"/>
<dbReference type="EnsemblProtists" id="CEG36406">
    <property type="protein sequence ID" value="CEG36406"/>
    <property type="gene ID" value="CEG36406"/>
</dbReference>
<dbReference type="Proteomes" id="UP000054928">
    <property type="component" value="Unassembled WGS sequence"/>
</dbReference>
<dbReference type="GO" id="GO:0005576">
    <property type="term" value="C:extracellular region"/>
    <property type="evidence" value="ECO:0007669"/>
    <property type="project" value="UniProtKB-SubCell"/>
</dbReference>
<dbReference type="GO" id="GO:0020002">
    <property type="term" value="C:host cell plasma membrane"/>
    <property type="evidence" value="ECO:0007669"/>
    <property type="project" value="UniProtKB-SubCell"/>
</dbReference>
<dbReference type="GO" id="GO:0016020">
    <property type="term" value="C:membrane"/>
    <property type="evidence" value="ECO:0007669"/>
    <property type="project" value="UniProtKB-KW"/>
</dbReference>